<feature type="chain" id="PRO_0000079999" description="Protein Dr1 homolog">
    <location>
        <begin position="1"/>
        <end position="159"/>
    </location>
</feature>
<feature type="region of interest" description="Disordered" evidence="2">
    <location>
        <begin position="135"/>
        <end position="159"/>
    </location>
</feature>
<feature type="compositionally biased region" description="Basic and acidic residues" evidence="2">
    <location>
        <begin position="148"/>
        <end position="159"/>
    </location>
</feature>
<accession>P49592</accession>
<comment type="interaction">
    <interactant intactId="EBI-15193559">
        <id>P49592</id>
    </interactant>
    <interactant intactId="EBI-15191807">
        <id>F4K162</id>
        <label>At5g19490</label>
    </interactant>
    <organismsDiffer>false</organismsDiffer>
    <experiments>3</experiments>
</comment>
<comment type="interaction">
    <interactant intactId="EBI-15193559">
        <id>P49592</id>
    </interactant>
    <interactant intactId="EBI-4452389">
        <id>Q9LHG0</id>
        <label>NF-YC11</label>
    </interactant>
    <organismsDiffer>false</organismsDiffer>
    <experiments>3</experiments>
</comment>
<comment type="subcellular location">
    <subcellularLocation>
        <location evidence="1">Nucleus</location>
    </subcellularLocation>
</comment>
<comment type="alternative products">
    <event type="alternative splicing"/>
    <isoform>
        <id>P49592-1</id>
        <name>1</name>
        <sequence type="displayed"/>
    </isoform>
    <text>A number of isoforms are produced. According to EST sequences.</text>
</comment>
<comment type="similarity">
    <text evidence="3">Belongs to the NC2 beta/DR1 family.</text>
</comment>
<dbReference type="EMBL" id="D38110">
    <property type="protein sequence ID" value="BAA07288.1"/>
    <property type="molecule type" value="mRNA"/>
</dbReference>
<dbReference type="EMBL" id="AB006708">
    <property type="protein sequence ID" value="BAB09826.1"/>
    <property type="molecule type" value="Genomic_DNA"/>
</dbReference>
<dbReference type="EMBL" id="CP002688">
    <property type="protein sequence ID" value="AED93118.1"/>
    <property type="molecule type" value="Genomic_DNA"/>
</dbReference>
<dbReference type="EMBL" id="CP002688">
    <property type="protein sequence ID" value="AED93120.1"/>
    <property type="molecule type" value="Genomic_DNA"/>
</dbReference>
<dbReference type="EMBL" id="CP002688">
    <property type="protein sequence ID" value="ANM68726.1"/>
    <property type="molecule type" value="Genomic_DNA"/>
</dbReference>
<dbReference type="EMBL" id="AY057709">
    <property type="protein sequence ID" value="AAL15339.1"/>
    <property type="molecule type" value="mRNA"/>
</dbReference>
<dbReference type="EMBL" id="AY116960">
    <property type="protein sequence ID" value="AAM51594.1"/>
    <property type="molecule type" value="mRNA"/>
</dbReference>
<dbReference type="PIR" id="S53582">
    <property type="entry name" value="S53582"/>
</dbReference>
<dbReference type="RefSeq" id="NP_001330452.1">
    <molecule id="P49592-1"/>
    <property type="nucleotide sequence ID" value="NM_001343789.1"/>
</dbReference>
<dbReference type="RefSeq" id="NP_851060.1">
    <molecule id="P49592-1"/>
    <property type="nucleotide sequence ID" value="NM_180729.3"/>
</dbReference>
<dbReference type="RefSeq" id="NP_851061.1">
    <molecule id="P49592-1"/>
    <property type="nucleotide sequence ID" value="NM_180730.3"/>
</dbReference>
<dbReference type="SMR" id="P49592"/>
<dbReference type="BioGRID" id="17648">
    <property type="interactions" value="13"/>
</dbReference>
<dbReference type="FunCoup" id="P49592">
    <property type="interactions" value="3805"/>
</dbReference>
<dbReference type="IntAct" id="P49592">
    <property type="interactions" value="9"/>
</dbReference>
<dbReference type="STRING" id="3702.P49592"/>
<dbReference type="iPTMnet" id="P49592"/>
<dbReference type="PaxDb" id="3702-AT5G23090.2"/>
<dbReference type="EnsemblPlants" id="AT5G23090.1">
    <molecule id="P49592-1"/>
    <property type="protein sequence ID" value="AT5G23090.1"/>
    <property type="gene ID" value="AT5G23090"/>
</dbReference>
<dbReference type="EnsemblPlants" id="AT5G23090.2">
    <molecule id="P49592-1"/>
    <property type="protein sequence ID" value="AT5G23090.2"/>
    <property type="gene ID" value="AT5G23090"/>
</dbReference>
<dbReference type="EnsemblPlants" id="AT5G23090.5">
    <molecule id="P49592-1"/>
    <property type="protein sequence ID" value="AT5G23090.5"/>
    <property type="gene ID" value="AT5G23090"/>
</dbReference>
<dbReference type="GeneID" id="832373"/>
<dbReference type="Gramene" id="AT5G23090.1">
    <molecule id="P49592-1"/>
    <property type="protein sequence ID" value="AT5G23090.1"/>
    <property type="gene ID" value="AT5G23090"/>
</dbReference>
<dbReference type="Gramene" id="AT5G23090.2">
    <molecule id="P49592-1"/>
    <property type="protein sequence ID" value="AT5G23090.2"/>
    <property type="gene ID" value="AT5G23090"/>
</dbReference>
<dbReference type="Gramene" id="AT5G23090.5">
    <molecule id="P49592-1"/>
    <property type="protein sequence ID" value="AT5G23090.5"/>
    <property type="gene ID" value="AT5G23090"/>
</dbReference>
<dbReference type="KEGG" id="ath:AT5G23090"/>
<dbReference type="Araport" id="AT5G23090"/>
<dbReference type="TAIR" id="AT5G23090">
    <property type="gene designation" value="NF-YB13"/>
</dbReference>
<dbReference type="eggNOG" id="KOG0871">
    <property type="taxonomic scope" value="Eukaryota"/>
</dbReference>
<dbReference type="HOGENOM" id="CLU_066247_11_0_1"/>
<dbReference type="InParanoid" id="P49592"/>
<dbReference type="OrthoDB" id="601405at2759"/>
<dbReference type="PhylomeDB" id="P49592"/>
<dbReference type="PRO" id="PR:P49592"/>
<dbReference type="Proteomes" id="UP000006548">
    <property type="component" value="Chromosome 5"/>
</dbReference>
<dbReference type="ExpressionAtlas" id="P49592">
    <property type="expression patterns" value="baseline and differential"/>
</dbReference>
<dbReference type="GO" id="GO:0005634">
    <property type="term" value="C:nucleus"/>
    <property type="evidence" value="ECO:0007005"/>
    <property type="project" value="TAIR"/>
</dbReference>
<dbReference type="GO" id="GO:0003700">
    <property type="term" value="F:DNA-binding transcription factor activity"/>
    <property type="evidence" value="ECO:0000250"/>
    <property type="project" value="TAIR"/>
</dbReference>
<dbReference type="GO" id="GO:0046982">
    <property type="term" value="F:protein heterodimerization activity"/>
    <property type="evidence" value="ECO:0007669"/>
    <property type="project" value="InterPro"/>
</dbReference>
<dbReference type="GO" id="GO:0000976">
    <property type="term" value="F:transcription cis-regulatory region binding"/>
    <property type="evidence" value="ECO:0000353"/>
    <property type="project" value="TAIR"/>
</dbReference>
<dbReference type="GO" id="GO:0006355">
    <property type="term" value="P:regulation of DNA-templated transcription"/>
    <property type="evidence" value="ECO:0000304"/>
    <property type="project" value="TAIR"/>
</dbReference>
<dbReference type="CDD" id="cd22905">
    <property type="entry name" value="HFD_Dr1"/>
    <property type="match status" value="1"/>
</dbReference>
<dbReference type="FunFam" id="1.10.20.10:FF:000019">
    <property type="entry name" value="Negative cofactor 2 beta"/>
    <property type="match status" value="1"/>
</dbReference>
<dbReference type="Gene3D" id="1.10.20.10">
    <property type="entry name" value="Histone, subunit A"/>
    <property type="match status" value="1"/>
</dbReference>
<dbReference type="InterPro" id="IPR003958">
    <property type="entry name" value="CBFA_NFYB_domain"/>
</dbReference>
<dbReference type="InterPro" id="IPR044255">
    <property type="entry name" value="Dr1-like"/>
</dbReference>
<dbReference type="InterPro" id="IPR009072">
    <property type="entry name" value="Histone-fold"/>
</dbReference>
<dbReference type="PANTHER" id="PTHR47173">
    <property type="entry name" value="PROTEIN DR1 HOMOLOG"/>
    <property type="match status" value="1"/>
</dbReference>
<dbReference type="PANTHER" id="PTHR47173:SF3">
    <property type="entry name" value="PROTEIN DR1 HOMOLOG"/>
    <property type="match status" value="1"/>
</dbReference>
<dbReference type="Pfam" id="PF00808">
    <property type="entry name" value="CBFD_NFYB_HMF"/>
    <property type="match status" value="1"/>
</dbReference>
<dbReference type="SUPFAM" id="SSF47113">
    <property type="entry name" value="Histone-fold"/>
    <property type="match status" value="1"/>
</dbReference>
<protein>
    <recommendedName>
        <fullName>Protein Dr1 homolog</fullName>
    </recommendedName>
    <alternativeName>
        <fullName>Negative cofactor 2-beta homolog</fullName>
        <shortName>NC2-beta homolog</shortName>
    </alternativeName>
</protein>
<sequence>MDPMDIVGKSKEDASLPKATMTKIIKEMLPPDVRVARDAQDLLIECCVEFINLVSSESNDVCNKEDKRTIAPEHVLKALQVLGFGEYIEEVYAAYEQHKYETMQDTQRSVKWNPGAQMTEEEAAAEQQRMFAEARARMNGGVSVPQPEHPETDQRSPQS</sequence>
<reference key="1">
    <citation type="journal article" date="1994" name="Nucleic Acids Res.">
        <title>Cloning of cDNAs from Arabidopsis thaliana that encode putative protein phosphatase 2C and a human Dr1-like protein by transformation of a fission yeast mutant.</title>
        <authorList>
            <person name="Kuromori T."/>
            <person name="Yamamoto M."/>
        </authorList>
    </citation>
    <scope>NUCLEOTIDE SEQUENCE [MRNA]</scope>
    <source>
        <strain>cv. Columbia</strain>
    </source>
</reference>
<reference key="2">
    <citation type="journal article" date="1997" name="DNA Res.">
        <title>Structural analysis of Arabidopsis thaliana chromosome 5. II. Sequence features of the regions of 1,044,062 bp covered by thirteen physically assigned P1 clones.</title>
        <authorList>
            <person name="Kotani H."/>
            <person name="Nakamura Y."/>
            <person name="Sato S."/>
            <person name="Kaneko T."/>
            <person name="Asamizu E."/>
            <person name="Miyajima N."/>
            <person name="Tabata S."/>
        </authorList>
    </citation>
    <scope>NUCLEOTIDE SEQUENCE [LARGE SCALE GENOMIC DNA]</scope>
    <source>
        <strain>cv. Columbia</strain>
    </source>
</reference>
<reference key="3">
    <citation type="journal article" date="2017" name="Plant J.">
        <title>Araport11: a complete reannotation of the Arabidopsis thaliana reference genome.</title>
        <authorList>
            <person name="Cheng C.Y."/>
            <person name="Krishnakumar V."/>
            <person name="Chan A.P."/>
            <person name="Thibaud-Nissen F."/>
            <person name="Schobel S."/>
            <person name="Town C.D."/>
        </authorList>
    </citation>
    <scope>GENOME REANNOTATION</scope>
    <source>
        <strain>cv. Columbia</strain>
    </source>
</reference>
<reference key="4">
    <citation type="journal article" date="2003" name="Science">
        <title>Empirical analysis of transcriptional activity in the Arabidopsis genome.</title>
        <authorList>
            <person name="Yamada K."/>
            <person name="Lim J."/>
            <person name="Dale J.M."/>
            <person name="Chen H."/>
            <person name="Shinn P."/>
            <person name="Palm C.J."/>
            <person name="Southwick A.M."/>
            <person name="Wu H.C."/>
            <person name="Kim C.J."/>
            <person name="Nguyen M."/>
            <person name="Pham P.K."/>
            <person name="Cheuk R.F."/>
            <person name="Karlin-Newmann G."/>
            <person name="Liu S.X."/>
            <person name="Lam B."/>
            <person name="Sakano H."/>
            <person name="Wu T."/>
            <person name="Yu G."/>
            <person name="Miranda M."/>
            <person name="Quach H.L."/>
            <person name="Tripp M."/>
            <person name="Chang C.H."/>
            <person name="Lee J.M."/>
            <person name="Toriumi M.J."/>
            <person name="Chan M.M."/>
            <person name="Tang C.C."/>
            <person name="Onodera C.S."/>
            <person name="Deng J.M."/>
            <person name="Akiyama K."/>
            <person name="Ansari Y."/>
            <person name="Arakawa T."/>
            <person name="Banh J."/>
            <person name="Banno F."/>
            <person name="Bowser L."/>
            <person name="Brooks S.Y."/>
            <person name="Carninci P."/>
            <person name="Chao Q."/>
            <person name="Choy N."/>
            <person name="Enju A."/>
            <person name="Goldsmith A.D."/>
            <person name="Gurjal M."/>
            <person name="Hansen N.F."/>
            <person name="Hayashizaki Y."/>
            <person name="Johnson-Hopson C."/>
            <person name="Hsuan V.W."/>
            <person name="Iida K."/>
            <person name="Karnes M."/>
            <person name="Khan S."/>
            <person name="Koesema E."/>
            <person name="Ishida J."/>
            <person name="Jiang P.X."/>
            <person name="Jones T."/>
            <person name="Kawai J."/>
            <person name="Kamiya A."/>
            <person name="Meyers C."/>
            <person name="Nakajima M."/>
            <person name="Narusaka M."/>
            <person name="Seki M."/>
            <person name="Sakurai T."/>
            <person name="Satou M."/>
            <person name="Tamse R."/>
            <person name="Vaysberg M."/>
            <person name="Wallender E.K."/>
            <person name="Wong C."/>
            <person name="Yamamura Y."/>
            <person name="Yuan S."/>
            <person name="Shinozaki K."/>
            <person name="Davis R.W."/>
            <person name="Theologis A."/>
            <person name="Ecker J.R."/>
        </authorList>
    </citation>
    <scope>NUCLEOTIDE SEQUENCE [LARGE SCALE MRNA]</scope>
    <source>
        <strain>cv. Columbia</strain>
    </source>
</reference>
<name>NC2B_ARATH</name>
<organism>
    <name type="scientific">Arabidopsis thaliana</name>
    <name type="common">Mouse-ear cress</name>
    <dbReference type="NCBI Taxonomy" id="3702"/>
    <lineage>
        <taxon>Eukaryota</taxon>
        <taxon>Viridiplantae</taxon>
        <taxon>Streptophyta</taxon>
        <taxon>Embryophyta</taxon>
        <taxon>Tracheophyta</taxon>
        <taxon>Spermatophyta</taxon>
        <taxon>Magnoliopsida</taxon>
        <taxon>eudicotyledons</taxon>
        <taxon>Gunneridae</taxon>
        <taxon>Pentapetalae</taxon>
        <taxon>rosids</taxon>
        <taxon>malvids</taxon>
        <taxon>Brassicales</taxon>
        <taxon>Brassicaceae</taxon>
        <taxon>Camelineae</taxon>
        <taxon>Arabidopsis</taxon>
    </lineage>
</organism>
<keyword id="KW-0025">Alternative splicing</keyword>
<keyword id="KW-0539">Nucleus</keyword>
<keyword id="KW-1185">Reference proteome</keyword>
<keyword id="KW-0804">Transcription</keyword>
<proteinExistence type="evidence at protein level"/>
<gene>
    <name type="primary">DR1</name>
    <name type="ordered locus">At5g23090</name>
    <name type="ORF">MYJ24.8</name>
</gene>
<evidence type="ECO:0000250" key="1"/>
<evidence type="ECO:0000256" key="2">
    <source>
        <dbReference type="SAM" id="MobiDB-lite"/>
    </source>
</evidence>
<evidence type="ECO:0000305" key="3"/>